<proteinExistence type="inferred from homology"/>
<protein>
    <recommendedName>
        <fullName evidence="1">Large ribosomal subunit protein bL25</fullName>
    </recommendedName>
    <alternativeName>
        <fullName evidence="3">50S ribosomal protein L25</fullName>
    </alternativeName>
    <alternativeName>
        <fullName evidence="1">General stress protein CTC</fullName>
    </alternativeName>
</protein>
<gene>
    <name evidence="1" type="primary">rplY</name>
    <name evidence="1" type="synonym">ctc</name>
    <name type="ordered locus">MADE_1007570</name>
</gene>
<dbReference type="EMBL" id="CP001103">
    <property type="protein sequence ID" value="AEA97654.1"/>
    <property type="molecule type" value="Genomic_DNA"/>
</dbReference>
<dbReference type="RefSeq" id="WP_012517994.1">
    <property type="nucleotide sequence ID" value="NC_011138.3"/>
</dbReference>
<dbReference type="SMR" id="B4RSW4"/>
<dbReference type="KEGG" id="amc:MADE_1007570"/>
<dbReference type="HOGENOM" id="CLU_075939_0_1_6"/>
<dbReference type="Proteomes" id="UP000001870">
    <property type="component" value="Chromosome"/>
</dbReference>
<dbReference type="GO" id="GO:0022625">
    <property type="term" value="C:cytosolic large ribosomal subunit"/>
    <property type="evidence" value="ECO:0007669"/>
    <property type="project" value="TreeGrafter"/>
</dbReference>
<dbReference type="GO" id="GO:0008097">
    <property type="term" value="F:5S rRNA binding"/>
    <property type="evidence" value="ECO:0007669"/>
    <property type="project" value="InterPro"/>
</dbReference>
<dbReference type="GO" id="GO:0003735">
    <property type="term" value="F:structural constituent of ribosome"/>
    <property type="evidence" value="ECO:0007669"/>
    <property type="project" value="InterPro"/>
</dbReference>
<dbReference type="GO" id="GO:0006412">
    <property type="term" value="P:translation"/>
    <property type="evidence" value="ECO:0007669"/>
    <property type="project" value="UniProtKB-UniRule"/>
</dbReference>
<dbReference type="CDD" id="cd00495">
    <property type="entry name" value="Ribosomal_L25_TL5_CTC"/>
    <property type="match status" value="1"/>
</dbReference>
<dbReference type="FunFam" id="2.40.240.10:FF:000002">
    <property type="entry name" value="50S ribosomal protein L25"/>
    <property type="match status" value="1"/>
</dbReference>
<dbReference type="Gene3D" id="2.170.120.20">
    <property type="entry name" value="Ribosomal protein L25, beta domain"/>
    <property type="match status" value="1"/>
</dbReference>
<dbReference type="Gene3D" id="2.40.240.10">
    <property type="entry name" value="Ribosomal Protein L25, Chain P"/>
    <property type="match status" value="1"/>
</dbReference>
<dbReference type="HAMAP" id="MF_01336">
    <property type="entry name" value="Ribosomal_bL25"/>
    <property type="match status" value="1"/>
</dbReference>
<dbReference type="HAMAP" id="MF_01334">
    <property type="entry name" value="Ribosomal_bL25_CTC"/>
    <property type="match status" value="1"/>
</dbReference>
<dbReference type="InterPro" id="IPR020056">
    <property type="entry name" value="Rbsml_bL25/Gln-tRNA_synth_N"/>
</dbReference>
<dbReference type="InterPro" id="IPR011035">
    <property type="entry name" value="Ribosomal_bL25/Gln-tRNA_synth"/>
</dbReference>
<dbReference type="InterPro" id="IPR020057">
    <property type="entry name" value="Ribosomal_bL25_b-dom"/>
</dbReference>
<dbReference type="InterPro" id="IPR037121">
    <property type="entry name" value="Ribosomal_bL25_C"/>
</dbReference>
<dbReference type="InterPro" id="IPR001021">
    <property type="entry name" value="Ribosomal_bL25_long"/>
</dbReference>
<dbReference type="InterPro" id="IPR020055">
    <property type="entry name" value="Ribosomal_bL25_short"/>
</dbReference>
<dbReference type="InterPro" id="IPR029751">
    <property type="entry name" value="Ribosomal_L25_dom"/>
</dbReference>
<dbReference type="InterPro" id="IPR020930">
    <property type="entry name" value="Ribosomal_uL5_bac-type"/>
</dbReference>
<dbReference type="NCBIfam" id="TIGR00731">
    <property type="entry name" value="bL25_bact_ctc"/>
    <property type="match status" value="1"/>
</dbReference>
<dbReference type="NCBIfam" id="NF004128">
    <property type="entry name" value="PRK05618.1-2"/>
    <property type="match status" value="1"/>
</dbReference>
<dbReference type="NCBIfam" id="NF004130">
    <property type="entry name" value="PRK05618.1-5"/>
    <property type="match status" value="1"/>
</dbReference>
<dbReference type="NCBIfam" id="NF004612">
    <property type="entry name" value="PRK05943.1"/>
    <property type="match status" value="1"/>
</dbReference>
<dbReference type="PANTHER" id="PTHR33284">
    <property type="entry name" value="RIBOSOMAL PROTEIN L25/GLN-TRNA SYNTHETASE, ANTI-CODON-BINDING DOMAIN-CONTAINING PROTEIN"/>
    <property type="match status" value="1"/>
</dbReference>
<dbReference type="PANTHER" id="PTHR33284:SF1">
    <property type="entry name" value="RIBOSOMAL PROTEIN L25_GLN-TRNA SYNTHETASE, ANTI-CODON-BINDING DOMAIN-CONTAINING PROTEIN"/>
    <property type="match status" value="1"/>
</dbReference>
<dbReference type="Pfam" id="PF01386">
    <property type="entry name" value="Ribosomal_L25p"/>
    <property type="match status" value="1"/>
</dbReference>
<dbReference type="Pfam" id="PF14693">
    <property type="entry name" value="Ribosomal_TL5_C"/>
    <property type="match status" value="1"/>
</dbReference>
<dbReference type="SUPFAM" id="SSF50715">
    <property type="entry name" value="Ribosomal protein L25-like"/>
    <property type="match status" value="1"/>
</dbReference>
<comment type="function">
    <text evidence="1">This is one of the proteins that binds to the 5S RNA in the ribosome where it forms part of the central protuberance.</text>
</comment>
<comment type="subunit">
    <text evidence="1">Part of the 50S ribosomal subunit; part of the 5S rRNA/L5/L18/L25 subcomplex. Contacts the 5S rRNA. Binds to the 5S rRNA independently of L5 and L18.</text>
</comment>
<comment type="similarity">
    <text evidence="1">Belongs to the bacterial ribosomal protein bL25 family. CTC subfamily.</text>
</comment>
<sequence length="210" mass="22926">MSEAIFNLDASVRTDLGKGASRRLRREDKLPGIIYGGEEAPVSITLDHNKVNNSADFEAFYSHVLTLNLDGKPVEVLVKDMQRHPYKPKIMHIDFQRVIAGEDVHTNVPLHFVNEEKSAAVKAGGIAEHHVTEIEVTCQPKDLPEFIEVDMAAVEMGQTVHLSDLTLPAGVSSVELAKNDEAHDLAVVTVKPAPKAAETDEDGEEAASEE</sequence>
<organism>
    <name type="scientific">Alteromonas mediterranea (strain DSM 17117 / CIP 110805 / LMG 28347 / Deep ecotype)</name>
    <dbReference type="NCBI Taxonomy" id="1774373"/>
    <lineage>
        <taxon>Bacteria</taxon>
        <taxon>Pseudomonadati</taxon>
        <taxon>Pseudomonadota</taxon>
        <taxon>Gammaproteobacteria</taxon>
        <taxon>Alteromonadales</taxon>
        <taxon>Alteromonadaceae</taxon>
        <taxon>Alteromonas/Salinimonas group</taxon>
        <taxon>Alteromonas</taxon>
    </lineage>
</organism>
<name>RL25_ALTMD</name>
<accession>B4RSW4</accession>
<accession>F2G7K4</accession>
<reference key="1">
    <citation type="journal article" date="2008" name="ISME J.">
        <title>Comparative genomics of two ecotypes of the marine planktonic copiotroph Alteromonas macleodii suggests alternative lifestyles associated with different kinds of particulate organic matter.</title>
        <authorList>
            <person name="Ivars-Martinez E."/>
            <person name="Martin-Cuadrado A.-B."/>
            <person name="D'Auria G."/>
            <person name="Mira A."/>
            <person name="Ferriera S."/>
            <person name="Johnson J."/>
            <person name="Friedman R."/>
            <person name="Rodriguez-Valera F."/>
        </authorList>
    </citation>
    <scope>NUCLEOTIDE SEQUENCE [LARGE SCALE GENOMIC DNA]</scope>
    <source>
        <strain>DSM 17117 / CIP 110805 / LMG 28347 / Deep ecotype</strain>
    </source>
</reference>
<keyword id="KW-0687">Ribonucleoprotein</keyword>
<keyword id="KW-0689">Ribosomal protein</keyword>
<keyword id="KW-0694">RNA-binding</keyword>
<keyword id="KW-0699">rRNA-binding</keyword>
<feature type="chain" id="PRO_1000142482" description="Large ribosomal subunit protein bL25">
    <location>
        <begin position="1"/>
        <end position="210"/>
    </location>
</feature>
<feature type="region of interest" description="Disordered" evidence="2">
    <location>
        <begin position="191"/>
        <end position="210"/>
    </location>
</feature>
<feature type="compositionally biased region" description="Acidic residues" evidence="2">
    <location>
        <begin position="199"/>
        <end position="210"/>
    </location>
</feature>
<evidence type="ECO:0000255" key="1">
    <source>
        <dbReference type="HAMAP-Rule" id="MF_01334"/>
    </source>
</evidence>
<evidence type="ECO:0000256" key="2">
    <source>
        <dbReference type="SAM" id="MobiDB-lite"/>
    </source>
</evidence>
<evidence type="ECO:0000305" key="3"/>